<gene>
    <name type="primary">clpB</name>
    <name type="ordered locus">pc0728</name>
</gene>
<proteinExistence type="inferred from homology"/>
<evidence type="ECO:0000250" key="1"/>
<evidence type="ECO:0000255" key="2">
    <source>
        <dbReference type="PROSITE-ProRule" id="PRU01251"/>
    </source>
</evidence>
<evidence type="ECO:0000305" key="3"/>
<keyword id="KW-0067">ATP-binding</keyword>
<keyword id="KW-0143">Chaperone</keyword>
<keyword id="KW-0175">Coiled coil</keyword>
<keyword id="KW-0963">Cytoplasm</keyword>
<keyword id="KW-0547">Nucleotide-binding</keyword>
<keyword id="KW-1185">Reference proteome</keyword>
<keyword id="KW-0677">Repeat</keyword>
<keyword id="KW-0346">Stress response</keyword>
<accession>Q6MD97</accession>
<organism>
    <name type="scientific">Protochlamydia amoebophila (strain UWE25)</name>
    <dbReference type="NCBI Taxonomy" id="264201"/>
    <lineage>
        <taxon>Bacteria</taxon>
        <taxon>Pseudomonadati</taxon>
        <taxon>Chlamydiota</taxon>
        <taxon>Chlamydiia</taxon>
        <taxon>Parachlamydiales</taxon>
        <taxon>Parachlamydiaceae</taxon>
        <taxon>Candidatus Protochlamydia</taxon>
    </lineage>
</organism>
<protein>
    <recommendedName>
        <fullName>Chaperone protein ClpB</fullName>
    </recommendedName>
</protein>
<dbReference type="EMBL" id="BX908798">
    <property type="protein sequence ID" value="CAF23452.1"/>
    <property type="molecule type" value="Genomic_DNA"/>
</dbReference>
<dbReference type="RefSeq" id="WP_011175278.1">
    <property type="nucleotide sequence ID" value="NC_005861.2"/>
</dbReference>
<dbReference type="SMR" id="Q6MD97"/>
<dbReference type="STRING" id="264201.pc0728"/>
<dbReference type="KEGG" id="pcu:PC_RS03505"/>
<dbReference type="eggNOG" id="COG0542">
    <property type="taxonomic scope" value="Bacteria"/>
</dbReference>
<dbReference type="HOGENOM" id="CLU_005070_4_0_0"/>
<dbReference type="OrthoDB" id="9803641at2"/>
<dbReference type="Proteomes" id="UP000000529">
    <property type="component" value="Chromosome"/>
</dbReference>
<dbReference type="GO" id="GO:0005737">
    <property type="term" value="C:cytoplasm"/>
    <property type="evidence" value="ECO:0007669"/>
    <property type="project" value="UniProtKB-SubCell"/>
</dbReference>
<dbReference type="GO" id="GO:0005524">
    <property type="term" value="F:ATP binding"/>
    <property type="evidence" value="ECO:0007669"/>
    <property type="project" value="UniProtKB-KW"/>
</dbReference>
<dbReference type="GO" id="GO:0016887">
    <property type="term" value="F:ATP hydrolysis activity"/>
    <property type="evidence" value="ECO:0007669"/>
    <property type="project" value="InterPro"/>
</dbReference>
<dbReference type="GO" id="GO:0034605">
    <property type="term" value="P:cellular response to heat"/>
    <property type="evidence" value="ECO:0007669"/>
    <property type="project" value="TreeGrafter"/>
</dbReference>
<dbReference type="CDD" id="cd00009">
    <property type="entry name" value="AAA"/>
    <property type="match status" value="1"/>
</dbReference>
<dbReference type="CDD" id="cd19499">
    <property type="entry name" value="RecA-like_ClpB_Hsp104-like"/>
    <property type="match status" value="1"/>
</dbReference>
<dbReference type="FunFam" id="3.40.50.300:FF:000120">
    <property type="entry name" value="ATP-dependent chaperone ClpB"/>
    <property type="match status" value="1"/>
</dbReference>
<dbReference type="FunFam" id="3.40.50.300:FF:000025">
    <property type="entry name" value="ATP-dependent Clp protease subunit"/>
    <property type="match status" value="1"/>
</dbReference>
<dbReference type="FunFam" id="3.40.50.300:FF:000010">
    <property type="entry name" value="Chaperone clpB 1, putative"/>
    <property type="match status" value="1"/>
</dbReference>
<dbReference type="Gene3D" id="1.10.8.60">
    <property type="match status" value="1"/>
</dbReference>
<dbReference type="Gene3D" id="1.10.1780.10">
    <property type="entry name" value="Clp, N-terminal domain"/>
    <property type="match status" value="1"/>
</dbReference>
<dbReference type="Gene3D" id="3.40.50.300">
    <property type="entry name" value="P-loop containing nucleotide triphosphate hydrolases"/>
    <property type="match status" value="3"/>
</dbReference>
<dbReference type="InterPro" id="IPR003593">
    <property type="entry name" value="AAA+_ATPase"/>
</dbReference>
<dbReference type="InterPro" id="IPR003959">
    <property type="entry name" value="ATPase_AAA_core"/>
</dbReference>
<dbReference type="InterPro" id="IPR019489">
    <property type="entry name" value="Clp_ATPase_C"/>
</dbReference>
<dbReference type="InterPro" id="IPR036628">
    <property type="entry name" value="Clp_N_dom_sf"/>
</dbReference>
<dbReference type="InterPro" id="IPR004176">
    <property type="entry name" value="Clp_R_dom"/>
</dbReference>
<dbReference type="InterPro" id="IPR001270">
    <property type="entry name" value="ClpA/B"/>
</dbReference>
<dbReference type="InterPro" id="IPR018368">
    <property type="entry name" value="ClpA/B_CS1"/>
</dbReference>
<dbReference type="InterPro" id="IPR028299">
    <property type="entry name" value="ClpA/B_CS2"/>
</dbReference>
<dbReference type="InterPro" id="IPR041546">
    <property type="entry name" value="ClpA/ClpB_AAA_lid"/>
</dbReference>
<dbReference type="InterPro" id="IPR050130">
    <property type="entry name" value="ClpA_ClpB"/>
</dbReference>
<dbReference type="InterPro" id="IPR027417">
    <property type="entry name" value="P-loop_NTPase"/>
</dbReference>
<dbReference type="PANTHER" id="PTHR11638">
    <property type="entry name" value="ATP-DEPENDENT CLP PROTEASE"/>
    <property type="match status" value="1"/>
</dbReference>
<dbReference type="PANTHER" id="PTHR11638:SF18">
    <property type="entry name" value="HEAT SHOCK PROTEIN 104"/>
    <property type="match status" value="1"/>
</dbReference>
<dbReference type="Pfam" id="PF00004">
    <property type="entry name" value="AAA"/>
    <property type="match status" value="1"/>
</dbReference>
<dbReference type="Pfam" id="PF07724">
    <property type="entry name" value="AAA_2"/>
    <property type="match status" value="1"/>
</dbReference>
<dbReference type="Pfam" id="PF17871">
    <property type="entry name" value="AAA_lid_9"/>
    <property type="match status" value="1"/>
</dbReference>
<dbReference type="Pfam" id="PF02861">
    <property type="entry name" value="Clp_N"/>
    <property type="match status" value="2"/>
</dbReference>
<dbReference type="Pfam" id="PF10431">
    <property type="entry name" value="ClpB_D2-small"/>
    <property type="match status" value="1"/>
</dbReference>
<dbReference type="PRINTS" id="PR00300">
    <property type="entry name" value="CLPPROTEASEA"/>
</dbReference>
<dbReference type="SMART" id="SM00382">
    <property type="entry name" value="AAA"/>
    <property type="match status" value="2"/>
</dbReference>
<dbReference type="SMART" id="SM01086">
    <property type="entry name" value="ClpB_D2-small"/>
    <property type="match status" value="1"/>
</dbReference>
<dbReference type="SUPFAM" id="SSF81923">
    <property type="entry name" value="Double Clp-N motif"/>
    <property type="match status" value="1"/>
</dbReference>
<dbReference type="SUPFAM" id="SSF52540">
    <property type="entry name" value="P-loop containing nucleoside triphosphate hydrolases"/>
    <property type="match status" value="2"/>
</dbReference>
<dbReference type="PROSITE" id="PS51903">
    <property type="entry name" value="CLP_R"/>
    <property type="match status" value="1"/>
</dbReference>
<dbReference type="PROSITE" id="PS00870">
    <property type="entry name" value="CLPAB_1"/>
    <property type="match status" value="1"/>
</dbReference>
<dbReference type="PROSITE" id="PS00871">
    <property type="entry name" value="CLPAB_2"/>
    <property type="match status" value="1"/>
</dbReference>
<name>CLPB_PARUW</name>
<reference key="1">
    <citation type="journal article" date="2004" name="Science">
        <title>Illuminating the evolutionary history of chlamydiae.</title>
        <authorList>
            <person name="Horn M."/>
            <person name="Collingro A."/>
            <person name="Schmitz-Esser S."/>
            <person name="Beier C.L."/>
            <person name="Purkhold U."/>
            <person name="Fartmann B."/>
            <person name="Brandt P."/>
            <person name="Nyakatura G.J."/>
            <person name="Droege M."/>
            <person name="Frishman D."/>
            <person name="Rattei T."/>
            <person name="Mewes H.-W."/>
            <person name="Wagner M."/>
        </authorList>
    </citation>
    <scope>NUCLEOTIDE SEQUENCE [LARGE SCALE GENOMIC DNA]</scope>
    <source>
        <strain>UWE25</strain>
    </source>
</reference>
<comment type="function">
    <text evidence="1">Part of a stress-induced multi-chaperone system, it is involved in the recovery of the cell from heat-induced damage, in cooperation with DnaK, DnaJ and GrpE. Acts before DnaK, in the processing of protein aggregates. Protein binding stimulates the ATPase activity; ATP hydrolysis unfolds the denatured protein aggregates, which probably helps expose new hydrophobic binding sites on the surface of ClpB-bound aggregates, contributing to the solubilization and refolding of denatured protein aggregates by DnaK (By similarity).</text>
</comment>
<comment type="subunit">
    <text evidence="1">Homohexamer. The oligomerization is ATP-dependent (By similarity).</text>
</comment>
<comment type="subcellular location">
    <subcellularLocation>
        <location evidence="3">Cytoplasm</location>
    </subcellularLocation>
</comment>
<comment type="domain">
    <text evidence="1">The Clp repeat (R) domain probably functions as a substrate-discriminating domain, recruiting aggregated proteins to the ClpB hexamer and/or stabilizing bound proteins. The NBD2 domain is responsible for oligomerization, whereas the NBD1 domain stabilizes the hexamer probably in an ATP-dependent manner. The movement of the coiled-coil domain is essential for ClpB ability to rescue proteins from an aggregated state, probably by pulling apart large aggregated proteins, which are bound between the coiled-coils motifs of adjacent ClpB subunits in the functional hexamer (By similarity).</text>
</comment>
<comment type="similarity">
    <text evidence="3">Belongs to the ClpA/ClpB family.</text>
</comment>
<feature type="chain" id="PRO_0000191151" description="Chaperone protein ClpB">
    <location>
        <begin position="1"/>
        <end position="868"/>
    </location>
</feature>
<feature type="domain" description="Clp R" evidence="2">
    <location>
        <begin position="1"/>
        <end position="146"/>
    </location>
</feature>
<feature type="region of interest" description="Repeat 1" evidence="2">
    <location>
        <begin position="5"/>
        <end position="70"/>
    </location>
</feature>
<feature type="region of interest" description="Repeat 2" evidence="2">
    <location>
        <begin position="82"/>
        <end position="146"/>
    </location>
</feature>
<feature type="region of interest" description="NBD1" evidence="1">
    <location>
        <begin position="159"/>
        <end position="340"/>
    </location>
</feature>
<feature type="region of interest" description="Linker" evidence="1">
    <location>
        <begin position="341"/>
        <end position="546"/>
    </location>
</feature>
<feature type="region of interest" description="NBD2" evidence="1">
    <location>
        <begin position="556"/>
        <end position="770"/>
    </location>
</feature>
<feature type="region of interest" description="C-terminal" evidence="1">
    <location>
        <begin position="771"/>
        <end position="868"/>
    </location>
</feature>
<feature type="coiled-coil region" evidence="1">
    <location>
        <begin position="391"/>
        <end position="525"/>
    </location>
</feature>
<feature type="binding site" evidence="1">
    <location>
        <begin position="206"/>
        <end position="213"/>
    </location>
    <ligand>
        <name>ATP</name>
        <dbReference type="ChEBI" id="CHEBI:30616"/>
        <label>1</label>
    </ligand>
</feature>
<feature type="binding site" evidence="1">
    <location>
        <begin position="606"/>
        <end position="613"/>
    </location>
    <ligand>
        <name>ATP</name>
        <dbReference type="ChEBI" id="CHEBI:30616"/>
        <label>2</label>
    </ligand>
</feature>
<sequence length="868" mass="98546">MNQNFTDHVAEAIQAAFAEAQRLNHTEVTENHLLWAFLKDKEGYFYSLLNGLGTNPQKLFQETENNIHHLPTYSGGGQAPNPSRSLQSRIVDAQNIAQSWKDTYTSSDHFLISYWKNGGDPFASWKKKTTISLEKLEEQIKKIRGDRHMDSPSSESNLQALEKYCKNLTDLARQGKLDPVIGRDEEIRRTMQVLCRRTKNNPMLIGDPGVGKTAIAEGLAQRIVQQDIPDSLKNKQLLALDMGSLIAGTKYRGEFEERLKGILQDIEKSEGQIILFIDEVHTLIGAGATDGAMDAANLLKPALARGILHCIGATTLNEYQKYIEKDAALERRFQLVLVNEPTIEDSIAILRGLRERYEIYHGVHITESAIHAAVLLSSRYITDRRLPDKAIDLIDESASLIRMQLGSRPLPIDNKERELAGLIVEQEAMKRESTPLAKNEVEKLEGRIAQIKEELKILREQWDQEKKIIESLKEKKDKLEKLRFEEEAAERKADYNRVAELRYNLIPQLQKEIEEAQTQLNNKPNRLLQEEVDESLIAQIVSKWTGIPVHKMLEGEAERLLHLENELEKRVVGQEIAVSAVSEAIRRSRSGLSDPNRPMGVFLFLGPTGVGKTELAKALAFQLFNQDEALIRLDMSEYMEKHTVSKLIGSPPGYIGYEEGGQLTEALRRRPYAVVLFDEIEKAHPDVFNILLQVFDDGRLTDSKGRVVNCKNALFIMTSNIGSDLLLEKMEQNKQGLAKDEIMLVLDPVIKKHFRPEFINRLDDILPFVPLREHDMEKIVVIQLNLLAKRLKDRDVELMWTPQALAHLAKEGYDPHFGARPLKRYIQQEVINQLSTAILEGKIPPHSHIKLELEGNTIRFKSFAGGKN</sequence>